<comment type="function">
    <text evidence="1">One of two assembly initiator proteins, it binds directly to the 5'-end of the 23S rRNA, where it nucleates assembly of the 50S subunit.</text>
</comment>
<comment type="function">
    <text evidence="1">One of the proteins that surrounds the polypeptide exit tunnel on the outside of the subunit.</text>
</comment>
<comment type="subunit">
    <text evidence="1">Part of the 50S ribosomal subunit.</text>
</comment>
<comment type="similarity">
    <text evidence="1">Belongs to the universal ribosomal protein uL24 family.</text>
</comment>
<gene>
    <name evidence="1" type="primary">rplX</name>
    <name type="ordered locus">BCQ_0134</name>
</gene>
<feature type="chain" id="PRO_1000165925" description="Large ribosomal subunit protein uL24">
    <location>
        <begin position="1"/>
        <end position="103"/>
    </location>
</feature>
<organism>
    <name type="scientific">Bacillus cereus (strain Q1)</name>
    <dbReference type="NCBI Taxonomy" id="361100"/>
    <lineage>
        <taxon>Bacteria</taxon>
        <taxon>Bacillati</taxon>
        <taxon>Bacillota</taxon>
        <taxon>Bacilli</taxon>
        <taxon>Bacillales</taxon>
        <taxon>Bacillaceae</taxon>
        <taxon>Bacillus</taxon>
        <taxon>Bacillus cereus group</taxon>
    </lineage>
</organism>
<reference key="1">
    <citation type="journal article" date="2009" name="J. Bacteriol.">
        <title>Complete genome sequence of the extremophilic Bacillus cereus strain Q1 with industrial applications.</title>
        <authorList>
            <person name="Xiong Z."/>
            <person name="Jiang Y."/>
            <person name="Qi D."/>
            <person name="Lu H."/>
            <person name="Yang F."/>
            <person name="Yang J."/>
            <person name="Chen L."/>
            <person name="Sun L."/>
            <person name="Xu X."/>
            <person name="Xue Y."/>
            <person name="Zhu Y."/>
            <person name="Jin Q."/>
        </authorList>
    </citation>
    <scope>NUCLEOTIDE SEQUENCE [LARGE SCALE GENOMIC DNA]</scope>
    <source>
        <strain>Q1</strain>
    </source>
</reference>
<protein>
    <recommendedName>
        <fullName evidence="1">Large ribosomal subunit protein uL24</fullName>
    </recommendedName>
    <alternativeName>
        <fullName evidence="2">50S ribosomal protein L24</fullName>
    </alternativeName>
</protein>
<dbReference type="EMBL" id="CP000227">
    <property type="protein sequence ID" value="ACM10649.1"/>
    <property type="molecule type" value="Genomic_DNA"/>
</dbReference>
<dbReference type="SMR" id="B9IZK5"/>
<dbReference type="KEGG" id="bcq:BCQ_0134"/>
<dbReference type="HOGENOM" id="CLU_093315_2_0_9"/>
<dbReference type="Proteomes" id="UP000000441">
    <property type="component" value="Chromosome"/>
</dbReference>
<dbReference type="GO" id="GO:1990904">
    <property type="term" value="C:ribonucleoprotein complex"/>
    <property type="evidence" value="ECO:0007669"/>
    <property type="project" value="UniProtKB-KW"/>
</dbReference>
<dbReference type="GO" id="GO:0005840">
    <property type="term" value="C:ribosome"/>
    <property type="evidence" value="ECO:0007669"/>
    <property type="project" value="UniProtKB-KW"/>
</dbReference>
<dbReference type="GO" id="GO:0019843">
    <property type="term" value="F:rRNA binding"/>
    <property type="evidence" value="ECO:0007669"/>
    <property type="project" value="UniProtKB-UniRule"/>
</dbReference>
<dbReference type="GO" id="GO:0003735">
    <property type="term" value="F:structural constituent of ribosome"/>
    <property type="evidence" value="ECO:0007669"/>
    <property type="project" value="InterPro"/>
</dbReference>
<dbReference type="GO" id="GO:0006412">
    <property type="term" value="P:translation"/>
    <property type="evidence" value="ECO:0007669"/>
    <property type="project" value="UniProtKB-UniRule"/>
</dbReference>
<dbReference type="CDD" id="cd06089">
    <property type="entry name" value="KOW_RPL26"/>
    <property type="match status" value="1"/>
</dbReference>
<dbReference type="FunFam" id="2.30.30.30:FF:000004">
    <property type="entry name" value="50S ribosomal protein L24"/>
    <property type="match status" value="1"/>
</dbReference>
<dbReference type="Gene3D" id="2.30.30.30">
    <property type="match status" value="1"/>
</dbReference>
<dbReference type="HAMAP" id="MF_01326_B">
    <property type="entry name" value="Ribosomal_uL24_B"/>
    <property type="match status" value="1"/>
</dbReference>
<dbReference type="InterPro" id="IPR005824">
    <property type="entry name" value="KOW"/>
</dbReference>
<dbReference type="InterPro" id="IPR014722">
    <property type="entry name" value="Rib_uL2_dom2"/>
</dbReference>
<dbReference type="InterPro" id="IPR003256">
    <property type="entry name" value="Ribosomal_uL24"/>
</dbReference>
<dbReference type="InterPro" id="IPR005825">
    <property type="entry name" value="Ribosomal_uL24_CS"/>
</dbReference>
<dbReference type="InterPro" id="IPR041988">
    <property type="entry name" value="Ribosomal_uL24_KOW"/>
</dbReference>
<dbReference type="InterPro" id="IPR008991">
    <property type="entry name" value="Translation_prot_SH3-like_sf"/>
</dbReference>
<dbReference type="NCBIfam" id="TIGR01079">
    <property type="entry name" value="rplX_bact"/>
    <property type="match status" value="1"/>
</dbReference>
<dbReference type="PANTHER" id="PTHR12903">
    <property type="entry name" value="MITOCHONDRIAL RIBOSOMAL PROTEIN L24"/>
    <property type="match status" value="1"/>
</dbReference>
<dbReference type="Pfam" id="PF00467">
    <property type="entry name" value="KOW"/>
    <property type="match status" value="1"/>
</dbReference>
<dbReference type="Pfam" id="PF17136">
    <property type="entry name" value="ribosomal_L24"/>
    <property type="match status" value="1"/>
</dbReference>
<dbReference type="SMART" id="SM00739">
    <property type="entry name" value="KOW"/>
    <property type="match status" value="1"/>
</dbReference>
<dbReference type="SUPFAM" id="SSF50104">
    <property type="entry name" value="Translation proteins SH3-like domain"/>
    <property type="match status" value="1"/>
</dbReference>
<dbReference type="PROSITE" id="PS01108">
    <property type="entry name" value="RIBOSOMAL_L24"/>
    <property type="match status" value="1"/>
</dbReference>
<evidence type="ECO:0000255" key="1">
    <source>
        <dbReference type="HAMAP-Rule" id="MF_01326"/>
    </source>
</evidence>
<evidence type="ECO:0000305" key="2"/>
<proteinExistence type="inferred from homology"/>
<accession>B9IZK5</accession>
<sequence>MHVKKGDKVQVITGKDKGKQGVILVAFPKQNRVIVEGVNIVKKHSKPSQLNPQGGIITKEAPIHVSNVMILDPKTGEPTRVGFKVEDGKKVRIAKKSGELLDK</sequence>
<name>RL24_BACCQ</name>
<keyword id="KW-0687">Ribonucleoprotein</keyword>
<keyword id="KW-0689">Ribosomal protein</keyword>
<keyword id="KW-0694">RNA-binding</keyword>
<keyword id="KW-0699">rRNA-binding</keyword>